<proteinExistence type="evidence at protein level"/>
<accession>O29285</accession>
<reference key="1">
    <citation type="journal article" date="1997" name="Nature">
        <title>The complete genome sequence of the hyperthermophilic, sulphate-reducing archaeon Archaeoglobus fulgidus.</title>
        <authorList>
            <person name="Klenk H.-P."/>
            <person name="Clayton R.A."/>
            <person name="Tomb J.-F."/>
            <person name="White O."/>
            <person name="Nelson K.E."/>
            <person name="Ketchum K.A."/>
            <person name="Dodson R.J."/>
            <person name="Gwinn M.L."/>
            <person name="Hickey E.K."/>
            <person name="Peterson J.D."/>
            <person name="Richardson D.L."/>
            <person name="Kerlavage A.R."/>
            <person name="Graham D.E."/>
            <person name="Kyrpides N.C."/>
            <person name="Fleischmann R.D."/>
            <person name="Quackenbush J."/>
            <person name="Lee N.H."/>
            <person name="Sutton G.G."/>
            <person name="Gill S.R."/>
            <person name="Kirkness E.F."/>
            <person name="Dougherty B.A."/>
            <person name="McKenney K."/>
            <person name="Adams M.D."/>
            <person name="Loftus B.J."/>
            <person name="Peterson S.N."/>
            <person name="Reich C.I."/>
            <person name="McNeil L.K."/>
            <person name="Badger J.H."/>
            <person name="Glodek A."/>
            <person name="Zhou L."/>
            <person name="Overbeek R."/>
            <person name="Gocayne J.D."/>
            <person name="Weidman J.F."/>
            <person name="McDonald L.A."/>
            <person name="Utterback T.R."/>
            <person name="Cotton M.D."/>
            <person name="Spriggs T."/>
            <person name="Artiach P."/>
            <person name="Kaine B.P."/>
            <person name="Sykes S.M."/>
            <person name="Sadow P.W."/>
            <person name="D'Andrea K.P."/>
            <person name="Bowman C."/>
            <person name="Fujii C."/>
            <person name="Garland S.A."/>
            <person name="Mason T.M."/>
            <person name="Olsen G.J."/>
            <person name="Fraser C.M."/>
            <person name="Smith H.O."/>
            <person name="Woese C.R."/>
            <person name="Venter J.C."/>
        </authorList>
    </citation>
    <scope>NUCLEOTIDE SEQUENCE [LARGE SCALE GENOMIC DNA]</scope>
    <source>
        <strain>ATCC 49558 / DSM 4304 / JCM 9628 / NBRC 100126 / VC-16</strain>
    </source>
</reference>
<reference key="2">
    <citation type="journal article" date="2005" name="Acta Crystallogr. F">
        <title>Expression, purification and crystallization of the ammonium transporter Amt-1 from Archaeoglobus fulgidus.</title>
        <authorList>
            <person name="Andrade S.L."/>
            <person name="Dickmanns A."/>
            <person name="Ficner R."/>
            <person name="Einsle O."/>
        </authorList>
    </citation>
    <scope>SUBUNIT</scope>
    <scope>SUBCELLULAR LOCATION</scope>
    <scope>CRYSTALLIZATION</scope>
</reference>
<reference key="3">
    <citation type="journal article" date="2012" name="J. Phys. Chem. B">
        <title>Thermodynamics of transport through the ammonium transporter Amt-1 investigated with free energy calculations.</title>
        <authorList>
            <person name="Ullmann R.T."/>
            <person name="Andrade S.L."/>
            <person name="Ullmann G.M."/>
        </authorList>
    </citation>
    <scope>FUNCTION</scope>
    <scope>THERMODYNAMICS</scope>
</reference>
<reference key="4">
    <citation type="journal article" date="2014" name="Proc. Natl. Acad. Sci. U.S.A.">
        <title>Direct observation of electrogenic NH4(+) transport in ammonium transport (Amt) proteins.</title>
        <authorList>
            <person name="Wacker T."/>
            <person name="Garcia-Celma J.J."/>
            <person name="Lewe P."/>
            <person name="Andrade S.L."/>
        </authorList>
    </citation>
    <scope>FUNCTION</scope>
    <scope>BIOPHYSICOCHEMICAL PROPERTIES</scope>
</reference>
<reference evidence="11 12 13 14" key="5">
    <citation type="journal article" date="2005" name="Proc. Natl. Acad. Sci. U.S.A.">
        <title>Crystal structure of the archaeal ammonium transporter Amt-1 from Archaeoglobus fulgidus.</title>
        <authorList>
            <person name="Andrade S.L."/>
            <person name="Dickmanns A."/>
            <person name="Ficner R."/>
            <person name="Einsle O."/>
        </authorList>
    </citation>
    <scope>X-RAY CRYSTALLOGRAPHY (1.54 ANGSTROMS)</scope>
    <scope>SUBUNIT</scope>
    <scope>SUBCELLULAR LOCATION</scope>
    <scope>TOPOLOGY</scope>
</reference>
<feature type="chain" id="PRO_0000453005" description="Ammonium transporter Amt1">
    <location>
        <begin position="1"/>
        <end position="391"/>
    </location>
</feature>
<feature type="topological domain" description="Extracellular" evidence="9">
    <location>
        <begin position="1"/>
        <end position="7"/>
    </location>
</feature>
<feature type="transmembrane region" description="Helical" evidence="2">
    <location>
        <begin position="8"/>
        <end position="27"/>
    </location>
</feature>
<feature type="topological domain" description="Cytoplasmic" evidence="9">
    <location>
        <begin position="28"/>
        <end position="38"/>
    </location>
</feature>
<feature type="transmembrane region" description="Helical" evidence="2">
    <location>
        <begin position="39"/>
        <end position="57"/>
    </location>
</feature>
<feature type="topological domain" description="Extracellular" evidence="9">
    <location>
        <begin position="58"/>
        <end position="89"/>
    </location>
</feature>
<feature type="transmembrane region" description="Helical" evidence="2">
    <location>
        <begin position="90"/>
        <end position="106"/>
    </location>
</feature>
<feature type="topological domain" description="Cytoplasmic" evidence="9">
    <location>
        <begin position="107"/>
        <end position="113"/>
    </location>
</feature>
<feature type="transmembrane region" description="Helical" evidence="2">
    <location>
        <begin position="114"/>
        <end position="137"/>
    </location>
</feature>
<feature type="topological domain" description="Extracellular" evidence="9">
    <location>
        <begin position="138"/>
        <end position="152"/>
    </location>
</feature>
<feature type="transmembrane region" description="Helical" evidence="2">
    <location>
        <begin position="153"/>
        <end position="170"/>
    </location>
</feature>
<feature type="topological domain" description="Cytoplasmic" evidence="9">
    <location>
        <begin position="171"/>
        <end position="188"/>
    </location>
</feature>
<feature type="transmembrane region" description="Helical" evidence="2">
    <location>
        <begin position="189"/>
        <end position="208"/>
    </location>
</feature>
<feature type="topological domain" description="Extracellular" evidence="9">
    <location>
        <begin position="209"/>
        <end position="217"/>
    </location>
</feature>
<feature type="transmembrane region" description="Helical" evidence="2">
    <location>
        <begin position="218"/>
        <end position="237"/>
    </location>
</feature>
<feature type="topological domain" description="Cytoplasmic" evidence="9">
    <location>
        <begin position="238"/>
        <end position="245"/>
    </location>
</feature>
<feature type="transmembrane region" description="Helical" evidence="2">
    <location>
        <begin position="246"/>
        <end position="263"/>
    </location>
</feature>
<feature type="topological domain" description="Extracellular" evidence="9">
    <location>
        <begin position="264"/>
        <end position="268"/>
    </location>
</feature>
<feature type="transmembrane region" description="Helical" evidence="2">
    <location>
        <begin position="269"/>
        <end position="287"/>
    </location>
</feature>
<feature type="topological domain" description="Cytoplasmic" evidence="9">
    <location>
        <begin position="288"/>
        <end position="300"/>
    </location>
</feature>
<feature type="transmembrane region" description="Helical" evidence="2">
    <location>
        <begin position="301"/>
        <end position="319"/>
    </location>
</feature>
<feature type="topological domain" description="Extracellular" evidence="9">
    <location>
        <begin position="320"/>
        <end position="337"/>
    </location>
</feature>
<feature type="transmembrane region" description="Helical" evidence="2">
    <location>
        <begin position="338"/>
        <end position="363"/>
    </location>
</feature>
<feature type="topological domain" description="Cytoplasmic" evidence="9">
    <location>
        <begin position="364"/>
        <end position="391"/>
    </location>
</feature>
<feature type="site" description="Twin-His motif. Important for optimum substrate conductance" evidence="1">
    <location>
        <position position="157"/>
    </location>
</feature>
<feature type="site" description="Twin-His motif. Important for optimum substrate conductance" evidence="1">
    <location>
        <position position="305"/>
    </location>
</feature>
<feature type="helix" evidence="15">
    <location>
        <begin position="3"/>
        <end position="28"/>
    </location>
</feature>
<feature type="helix" evidence="15">
    <location>
        <begin position="33"/>
        <end position="35"/>
    </location>
</feature>
<feature type="helix" evidence="15">
    <location>
        <begin position="36"/>
        <end position="56"/>
    </location>
</feature>
<feature type="helix" evidence="15">
    <location>
        <begin position="58"/>
        <end position="63"/>
    </location>
</feature>
<feature type="strand" evidence="15">
    <location>
        <begin position="64"/>
        <end position="67"/>
    </location>
</feature>
<feature type="turn" evidence="15">
    <location>
        <begin position="68"/>
        <end position="70"/>
    </location>
</feature>
<feature type="helix" evidence="15">
    <location>
        <begin position="77"/>
        <end position="79"/>
    </location>
</feature>
<feature type="helix" evidence="15">
    <location>
        <begin position="85"/>
        <end position="104"/>
    </location>
</feature>
<feature type="helix" evidence="15">
    <location>
        <begin position="105"/>
        <end position="108"/>
    </location>
</feature>
<feature type="turn" evidence="15">
    <location>
        <begin position="109"/>
        <end position="111"/>
    </location>
</feature>
<feature type="helix" evidence="15">
    <location>
        <begin position="114"/>
        <end position="127"/>
    </location>
</feature>
<feature type="helix" evidence="15">
    <location>
        <begin position="129"/>
        <end position="137"/>
    </location>
</feature>
<feature type="helix" evidence="15">
    <location>
        <begin position="141"/>
        <end position="144"/>
    </location>
</feature>
<feature type="turn" evidence="15">
    <location>
        <begin position="153"/>
        <end position="156"/>
    </location>
</feature>
<feature type="helix" evidence="15">
    <location>
        <begin position="157"/>
        <end position="171"/>
    </location>
</feature>
<feature type="turn" evidence="15">
    <location>
        <begin position="175"/>
        <end position="179"/>
    </location>
</feature>
<feature type="helix" evidence="15">
    <location>
        <begin position="187"/>
        <end position="206"/>
    </location>
</feature>
<feature type="helix" evidence="15">
    <location>
        <begin position="207"/>
        <end position="209"/>
    </location>
</feature>
<feature type="strand" evidence="15">
    <location>
        <begin position="210"/>
        <end position="213"/>
    </location>
</feature>
<feature type="helix" evidence="15">
    <location>
        <begin position="214"/>
        <end position="241"/>
    </location>
</feature>
<feature type="helix" evidence="15">
    <location>
        <begin position="246"/>
        <end position="260"/>
    </location>
</feature>
<feature type="turn" evidence="15">
    <location>
        <begin position="261"/>
        <end position="266"/>
    </location>
</feature>
<feature type="helix" evidence="15">
    <location>
        <begin position="269"/>
        <end position="292"/>
    </location>
</feature>
<feature type="helix" evidence="15">
    <location>
        <begin position="301"/>
        <end position="319"/>
    </location>
</feature>
<feature type="helix" evidence="15">
    <location>
        <begin position="322"/>
        <end position="325"/>
    </location>
</feature>
<feature type="helix" evidence="15">
    <location>
        <begin position="330"/>
        <end position="332"/>
    </location>
</feature>
<feature type="helix" evidence="15">
    <location>
        <begin position="335"/>
        <end position="366"/>
    </location>
</feature>
<feature type="helix" evidence="15">
    <location>
        <begin position="373"/>
        <end position="378"/>
    </location>
</feature>
<feature type="helix" evidence="15">
    <location>
        <begin position="380"/>
        <end position="385"/>
    </location>
</feature>
<sequence>MSDGNVAWILASTALVMLMVPGVGFFYAGMVRRKNAVNMIALSFISLIITVLLWIFYGYSVSFGNDISGIIGGLNYALLSGVKGEDLLFMMYQMMFAAVTIAILTSAIAERAKVSSFILLSALWLTFVYAPFAHWLWGGGWLAKLGALDFAGGMVVHISSGFAALAVAMTIGKRAGFEEYSIEPHSIPLTLIGAALLWFGWFGFNGGSALAANDVAINAVVVTNTSAAVAGFVWMVIGWIKGKPGSLGIVSGAIAGLAAITPAAGFVDVKGAIVIGLVAGIVCYLAMDFRIKKKIDESLDAWAIHGIGGLWGSVAVGILANPEVNGYAGLLFGNPQLLVSQLIAVASTTAYAFLVTLILAKAVDAAVGLRVSSQEEYVGLDLSQHEEVAYT</sequence>
<dbReference type="EMBL" id="AE000782">
    <property type="protein sequence ID" value="AAB90264.1"/>
    <property type="molecule type" value="Genomic_DNA"/>
</dbReference>
<dbReference type="PIR" id="A69372">
    <property type="entry name" value="A69372"/>
</dbReference>
<dbReference type="RefSeq" id="WP_010878477.1">
    <property type="nucleotide sequence ID" value="NC_000917.1"/>
</dbReference>
<dbReference type="PDB" id="2B2F">
    <property type="method" value="X-ray"/>
    <property type="resolution" value="1.72 A"/>
    <property type="chains" value="A=1-391"/>
</dbReference>
<dbReference type="PDB" id="2B2H">
    <property type="method" value="X-ray"/>
    <property type="resolution" value="1.54 A"/>
    <property type="chains" value="A=1-391"/>
</dbReference>
<dbReference type="PDB" id="2B2I">
    <property type="method" value="X-ray"/>
    <property type="resolution" value="1.85 A"/>
    <property type="chains" value="A=1-391"/>
</dbReference>
<dbReference type="PDB" id="2B2J">
    <property type="method" value="X-ray"/>
    <property type="resolution" value="1.85 A"/>
    <property type="chains" value="A=1-391"/>
</dbReference>
<dbReference type="PDBsum" id="2B2F"/>
<dbReference type="PDBsum" id="2B2H"/>
<dbReference type="PDBsum" id="2B2I"/>
<dbReference type="PDBsum" id="2B2J"/>
<dbReference type="SMR" id="O29285"/>
<dbReference type="STRING" id="224325.AF_0977"/>
<dbReference type="TCDB" id="1.A.11.1.6">
    <property type="family name" value="the ammonium transporter channel (amt) family"/>
</dbReference>
<dbReference type="PaxDb" id="224325-AF_0977"/>
<dbReference type="EnsemblBacteria" id="AAB90264">
    <property type="protein sequence ID" value="AAB90264"/>
    <property type="gene ID" value="AF_0977"/>
</dbReference>
<dbReference type="KEGG" id="afu:AF_0977"/>
<dbReference type="eggNOG" id="arCOG04397">
    <property type="taxonomic scope" value="Archaea"/>
</dbReference>
<dbReference type="HOGENOM" id="CLU_000445_33_0_2"/>
<dbReference type="OrthoDB" id="10960at2157"/>
<dbReference type="PhylomeDB" id="O29285"/>
<dbReference type="EvolutionaryTrace" id="O29285"/>
<dbReference type="Proteomes" id="UP000002199">
    <property type="component" value="Chromosome"/>
</dbReference>
<dbReference type="GO" id="GO:0005886">
    <property type="term" value="C:plasma membrane"/>
    <property type="evidence" value="ECO:0007669"/>
    <property type="project" value="UniProtKB-SubCell"/>
</dbReference>
<dbReference type="GO" id="GO:0008519">
    <property type="term" value="F:ammonium channel activity"/>
    <property type="evidence" value="ECO:0007669"/>
    <property type="project" value="InterPro"/>
</dbReference>
<dbReference type="Gene3D" id="1.10.3430.10">
    <property type="entry name" value="Ammonium transporter AmtB like domains"/>
    <property type="match status" value="1"/>
</dbReference>
<dbReference type="InterPro" id="IPR029020">
    <property type="entry name" value="Ammonium/urea_transptr"/>
</dbReference>
<dbReference type="InterPro" id="IPR001905">
    <property type="entry name" value="Ammonium_transpt"/>
</dbReference>
<dbReference type="InterPro" id="IPR024041">
    <property type="entry name" value="NH4_transpt_AmtB-like_dom"/>
</dbReference>
<dbReference type="NCBIfam" id="TIGR00836">
    <property type="entry name" value="amt"/>
    <property type="match status" value="1"/>
</dbReference>
<dbReference type="PANTHER" id="PTHR43029">
    <property type="entry name" value="AMMONIUM TRANSPORTER MEP2"/>
    <property type="match status" value="1"/>
</dbReference>
<dbReference type="PANTHER" id="PTHR43029:SF10">
    <property type="entry name" value="AMMONIUM TRANSPORTER MEP2"/>
    <property type="match status" value="1"/>
</dbReference>
<dbReference type="Pfam" id="PF00909">
    <property type="entry name" value="Ammonium_transp"/>
    <property type="match status" value="1"/>
</dbReference>
<dbReference type="SUPFAM" id="SSF111352">
    <property type="entry name" value="Ammonium transporter"/>
    <property type="match status" value="1"/>
</dbReference>
<keyword id="KW-0002">3D-structure</keyword>
<keyword id="KW-0924">Ammonia transport</keyword>
<keyword id="KW-1003">Cell membrane</keyword>
<keyword id="KW-0472">Membrane</keyword>
<keyword id="KW-1185">Reference proteome</keyword>
<keyword id="KW-0812">Transmembrane</keyword>
<keyword id="KW-1133">Transmembrane helix</keyword>
<keyword id="KW-0813">Transport</keyword>
<name>AMT1_ARCFU</name>
<organism>
    <name type="scientific">Archaeoglobus fulgidus (strain ATCC 49558 / DSM 4304 / JCM 9628 / NBRC 100126 / VC-16)</name>
    <dbReference type="NCBI Taxonomy" id="224325"/>
    <lineage>
        <taxon>Archaea</taxon>
        <taxon>Methanobacteriati</taxon>
        <taxon>Methanobacteriota</taxon>
        <taxon>Archaeoglobi</taxon>
        <taxon>Archaeoglobales</taxon>
        <taxon>Archaeoglobaceae</taxon>
        <taxon>Archaeoglobus</taxon>
    </lineage>
</organism>
<comment type="function">
    <text evidence="4 5">Involved in the uptake of ammonium/ammonia (NH(4)(+)/NH(3)) (PubMed:22804733, PubMed:24958855). Transport is electrogenic (PubMed:22804733, PubMed:24958855). Transport the ammonium and methylammonium cation with high specificity (PubMed:24958855).</text>
</comment>
<comment type="biophysicochemical properties">
    <phDependence>
        <text evidence="5">Transport is pH-dependent, with a steep decline at pH values about 5.0.</text>
    </phDependence>
</comment>
<comment type="subunit">
    <text evidence="2 3">Homotrimer.</text>
</comment>
<comment type="subcellular location">
    <subcellularLocation>
        <location evidence="2 3">Cell membrane</location>
        <topology evidence="2">Multi-pass membrane protein</topology>
    </subcellularLocation>
</comment>
<comment type="similarity">
    <text evidence="8">Belongs to the ammonia transporter channel (TC 1.A.11.2) family.</text>
</comment>
<evidence type="ECO:0000250" key="1">
    <source>
        <dbReference type="UniProtKB" id="P69681"/>
    </source>
</evidence>
<evidence type="ECO:0000269" key="2">
    <source>
    </source>
</evidence>
<evidence type="ECO:0000269" key="3">
    <source>
    </source>
</evidence>
<evidence type="ECO:0000269" key="4">
    <source>
    </source>
</evidence>
<evidence type="ECO:0000269" key="5">
    <source>
    </source>
</evidence>
<evidence type="ECO:0000303" key="6">
    <source>
    </source>
</evidence>
<evidence type="ECO:0000303" key="7">
    <source>
    </source>
</evidence>
<evidence type="ECO:0000305" key="8"/>
<evidence type="ECO:0000305" key="9">
    <source>
    </source>
</evidence>
<evidence type="ECO:0000312" key="10">
    <source>
        <dbReference type="EMBL" id="AAB90264.1"/>
    </source>
</evidence>
<evidence type="ECO:0007744" key="11">
    <source>
        <dbReference type="PDB" id="2B2F"/>
    </source>
</evidence>
<evidence type="ECO:0007744" key="12">
    <source>
        <dbReference type="PDB" id="2B2H"/>
    </source>
</evidence>
<evidence type="ECO:0007744" key="13">
    <source>
        <dbReference type="PDB" id="2B2I"/>
    </source>
</evidence>
<evidence type="ECO:0007744" key="14">
    <source>
        <dbReference type="PDB" id="2B2J"/>
    </source>
</evidence>
<evidence type="ECO:0007829" key="15">
    <source>
        <dbReference type="PDB" id="2B2H"/>
    </source>
</evidence>
<gene>
    <name evidence="6" type="primary">amt1</name>
    <name evidence="10" type="ordered locus">AF_0977</name>
</gene>
<protein>
    <recommendedName>
        <fullName evidence="6">Ammonium transporter Amt1</fullName>
    </recommendedName>
    <alternativeName>
        <fullName evidence="7">Af-Amt1</fullName>
    </alternativeName>
</protein>